<accession>A5ILL5</accession>
<keyword id="KW-0028">Amino-acid biosynthesis</keyword>
<keyword id="KW-0055">Arginine biosynthesis</keyword>
<keyword id="KW-0067">ATP-binding</keyword>
<keyword id="KW-0963">Cytoplasm</keyword>
<keyword id="KW-0418">Kinase</keyword>
<keyword id="KW-0547">Nucleotide-binding</keyword>
<keyword id="KW-0808">Transferase</keyword>
<name>ARGB_THEP1</name>
<feature type="chain" id="PRO_1000010550" description="Acetylglutamate kinase">
    <location>
        <begin position="1"/>
        <end position="282"/>
    </location>
</feature>
<feature type="binding site" evidence="1">
    <location>
        <begin position="62"/>
        <end position="63"/>
    </location>
    <ligand>
        <name>substrate</name>
    </ligand>
</feature>
<feature type="binding site" evidence="1">
    <location>
        <position position="84"/>
    </location>
    <ligand>
        <name>substrate</name>
    </ligand>
</feature>
<feature type="binding site" evidence="1">
    <location>
        <position position="178"/>
    </location>
    <ligand>
        <name>substrate</name>
    </ligand>
</feature>
<feature type="site" description="Transition state stabilizer" evidence="1">
    <location>
        <position position="27"/>
    </location>
</feature>
<feature type="site" description="Transition state stabilizer" evidence="1">
    <location>
        <position position="237"/>
    </location>
</feature>
<sequence length="282" mass="30331">MRIDTVNVLLEALPYIKEFYGKTFVIKFGGSAMKQENAKKAFIQDIILLKYTGIKPIIVHGGGPAISQMMKDLGIEPVFKNGHRVTDEKTMEIVEMVLVGKINKEIVMNLNLHGGRAVGICGKDSKLIVAEKETKHGDIGYVGKVKKVNPEILHALIENDYIPVIAPVGIGEDGHSYNINADTAAAEIAKSLMAEKLILLTDVDGVLKGDKLISTLTPDEAEDLIRDGTVTGGMIPKVECAVSAVRGGVGAVHIINGGLEHAILLEIFSRKGIGTMIKELEG</sequence>
<organism>
    <name type="scientific">Thermotoga petrophila (strain ATCC BAA-488 / DSM 13995 / JCM 10881 / RKU-1)</name>
    <dbReference type="NCBI Taxonomy" id="390874"/>
    <lineage>
        <taxon>Bacteria</taxon>
        <taxon>Thermotogati</taxon>
        <taxon>Thermotogota</taxon>
        <taxon>Thermotogae</taxon>
        <taxon>Thermotogales</taxon>
        <taxon>Thermotogaceae</taxon>
        <taxon>Thermotoga</taxon>
    </lineage>
</organism>
<evidence type="ECO:0000255" key="1">
    <source>
        <dbReference type="HAMAP-Rule" id="MF_00082"/>
    </source>
</evidence>
<dbReference type="EC" id="2.7.2.8" evidence="1"/>
<dbReference type="EMBL" id="CP000702">
    <property type="protein sequence ID" value="ABQ47088.1"/>
    <property type="molecule type" value="Genomic_DNA"/>
</dbReference>
<dbReference type="RefSeq" id="WP_011943616.1">
    <property type="nucleotide sequence ID" value="NC_009486.1"/>
</dbReference>
<dbReference type="SMR" id="A5ILL5"/>
<dbReference type="STRING" id="390874.Tpet_1071"/>
<dbReference type="KEGG" id="tpt:Tpet_1071"/>
<dbReference type="eggNOG" id="COG0548">
    <property type="taxonomic scope" value="Bacteria"/>
</dbReference>
<dbReference type="HOGENOM" id="CLU_053680_0_0_0"/>
<dbReference type="UniPathway" id="UPA00068">
    <property type="reaction ID" value="UER00107"/>
</dbReference>
<dbReference type="Proteomes" id="UP000006558">
    <property type="component" value="Chromosome"/>
</dbReference>
<dbReference type="GO" id="GO:0005737">
    <property type="term" value="C:cytoplasm"/>
    <property type="evidence" value="ECO:0007669"/>
    <property type="project" value="UniProtKB-SubCell"/>
</dbReference>
<dbReference type="GO" id="GO:0003991">
    <property type="term" value="F:acetylglutamate kinase activity"/>
    <property type="evidence" value="ECO:0007669"/>
    <property type="project" value="UniProtKB-UniRule"/>
</dbReference>
<dbReference type="GO" id="GO:0005524">
    <property type="term" value="F:ATP binding"/>
    <property type="evidence" value="ECO:0007669"/>
    <property type="project" value="UniProtKB-UniRule"/>
</dbReference>
<dbReference type="GO" id="GO:0042450">
    <property type="term" value="P:arginine biosynthetic process via ornithine"/>
    <property type="evidence" value="ECO:0007669"/>
    <property type="project" value="UniProtKB-UniRule"/>
</dbReference>
<dbReference type="GO" id="GO:0006526">
    <property type="term" value="P:L-arginine biosynthetic process"/>
    <property type="evidence" value="ECO:0007669"/>
    <property type="project" value="UniProtKB-UniPathway"/>
</dbReference>
<dbReference type="CDD" id="cd04250">
    <property type="entry name" value="AAK_NAGK-C"/>
    <property type="match status" value="1"/>
</dbReference>
<dbReference type="FunFam" id="3.40.1160.10:FF:000004">
    <property type="entry name" value="Acetylglutamate kinase"/>
    <property type="match status" value="1"/>
</dbReference>
<dbReference type="Gene3D" id="3.40.1160.10">
    <property type="entry name" value="Acetylglutamate kinase-like"/>
    <property type="match status" value="1"/>
</dbReference>
<dbReference type="HAMAP" id="MF_00082">
    <property type="entry name" value="ArgB"/>
    <property type="match status" value="1"/>
</dbReference>
<dbReference type="InterPro" id="IPR036393">
    <property type="entry name" value="AceGlu_kinase-like_sf"/>
</dbReference>
<dbReference type="InterPro" id="IPR004662">
    <property type="entry name" value="AcgluKinase_fam"/>
</dbReference>
<dbReference type="InterPro" id="IPR037528">
    <property type="entry name" value="ArgB"/>
</dbReference>
<dbReference type="InterPro" id="IPR001048">
    <property type="entry name" value="Asp/Glu/Uridylate_kinase"/>
</dbReference>
<dbReference type="InterPro" id="IPR001057">
    <property type="entry name" value="Glu/AcGlu_kinase"/>
</dbReference>
<dbReference type="InterPro" id="IPR041727">
    <property type="entry name" value="NAGK-C"/>
</dbReference>
<dbReference type="NCBIfam" id="TIGR00761">
    <property type="entry name" value="argB"/>
    <property type="match status" value="1"/>
</dbReference>
<dbReference type="PANTHER" id="PTHR23342">
    <property type="entry name" value="N-ACETYLGLUTAMATE SYNTHASE"/>
    <property type="match status" value="1"/>
</dbReference>
<dbReference type="PANTHER" id="PTHR23342:SF0">
    <property type="entry name" value="N-ACETYLGLUTAMATE SYNTHASE, MITOCHONDRIAL"/>
    <property type="match status" value="1"/>
</dbReference>
<dbReference type="Pfam" id="PF00696">
    <property type="entry name" value="AA_kinase"/>
    <property type="match status" value="1"/>
</dbReference>
<dbReference type="PIRSF" id="PIRSF000728">
    <property type="entry name" value="NAGK"/>
    <property type="match status" value="1"/>
</dbReference>
<dbReference type="PRINTS" id="PR00474">
    <property type="entry name" value="GLU5KINASE"/>
</dbReference>
<dbReference type="SUPFAM" id="SSF53633">
    <property type="entry name" value="Carbamate kinase-like"/>
    <property type="match status" value="1"/>
</dbReference>
<reference key="1">
    <citation type="submission" date="2007-05" db="EMBL/GenBank/DDBJ databases">
        <title>Complete sequence of Thermotoga petrophila RKU-1.</title>
        <authorList>
            <consortium name="US DOE Joint Genome Institute"/>
            <person name="Copeland A."/>
            <person name="Lucas S."/>
            <person name="Lapidus A."/>
            <person name="Barry K."/>
            <person name="Glavina del Rio T."/>
            <person name="Dalin E."/>
            <person name="Tice H."/>
            <person name="Pitluck S."/>
            <person name="Sims D."/>
            <person name="Brettin T."/>
            <person name="Bruce D."/>
            <person name="Detter J.C."/>
            <person name="Han C."/>
            <person name="Tapia R."/>
            <person name="Schmutz J."/>
            <person name="Larimer F."/>
            <person name="Land M."/>
            <person name="Hauser L."/>
            <person name="Kyrpides N."/>
            <person name="Mikhailova N."/>
            <person name="Nelson K."/>
            <person name="Gogarten J.P."/>
            <person name="Noll K."/>
            <person name="Richardson P."/>
        </authorList>
    </citation>
    <scope>NUCLEOTIDE SEQUENCE [LARGE SCALE GENOMIC DNA]</scope>
    <source>
        <strain>ATCC BAA-488 / DSM 13995 / JCM 10881 / RKU-1</strain>
    </source>
</reference>
<protein>
    <recommendedName>
        <fullName evidence="1">Acetylglutamate kinase</fullName>
        <ecNumber evidence="1">2.7.2.8</ecNumber>
    </recommendedName>
    <alternativeName>
        <fullName evidence="1">N-acetyl-L-glutamate 5-phosphotransferase</fullName>
    </alternativeName>
    <alternativeName>
        <fullName evidence="1">NAG kinase</fullName>
        <shortName evidence="1">NAGK</shortName>
    </alternativeName>
</protein>
<gene>
    <name evidence="1" type="primary">argB</name>
    <name type="ordered locus">Tpet_1071</name>
</gene>
<proteinExistence type="inferred from homology"/>
<comment type="function">
    <text evidence="1">Catalyzes the ATP-dependent phosphorylation of N-acetyl-L-glutamate.</text>
</comment>
<comment type="catalytic activity">
    <reaction evidence="1">
        <text>N-acetyl-L-glutamate + ATP = N-acetyl-L-glutamyl 5-phosphate + ADP</text>
        <dbReference type="Rhea" id="RHEA:14629"/>
        <dbReference type="ChEBI" id="CHEBI:30616"/>
        <dbReference type="ChEBI" id="CHEBI:44337"/>
        <dbReference type="ChEBI" id="CHEBI:57936"/>
        <dbReference type="ChEBI" id="CHEBI:456216"/>
        <dbReference type="EC" id="2.7.2.8"/>
    </reaction>
</comment>
<comment type="pathway">
    <text evidence="1">Amino-acid biosynthesis; L-arginine biosynthesis; N(2)-acetyl-L-ornithine from L-glutamate: step 2/4.</text>
</comment>
<comment type="subcellular location">
    <subcellularLocation>
        <location evidence="1">Cytoplasm</location>
    </subcellularLocation>
</comment>
<comment type="similarity">
    <text evidence="1">Belongs to the acetylglutamate kinase family. ArgB subfamily.</text>
</comment>